<comment type="similarity">
    <text evidence="3">Belongs to the mycobacterial PPE family.</text>
</comment>
<keyword id="KW-1185">Reference proteome</keyword>
<keyword id="KW-0732">Signal</keyword>
<proteinExistence type="inferred from homology"/>
<organism>
    <name type="scientific">Mycobacterium tuberculosis (strain ATCC 25618 / H37Rv)</name>
    <dbReference type="NCBI Taxonomy" id="83332"/>
    <lineage>
        <taxon>Bacteria</taxon>
        <taxon>Bacillati</taxon>
        <taxon>Actinomycetota</taxon>
        <taxon>Actinomycetes</taxon>
        <taxon>Mycobacteriales</taxon>
        <taxon>Mycobacteriaceae</taxon>
        <taxon>Mycobacterium</taxon>
        <taxon>Mycobacterium tuberculosis complex</taxon>
    </lineage>
</organism>
<protein>
    <recommendedName>
        <fullName>Uncharacterized PPE family protein PPE62</fullName>
    </recommendedName>
</protein>
<dbReference type="EMBL" id="AL123456">
    <property type="protein sequence ID" value="CCP46355.1"/>
    <property type="molecule type" value="Genomic_DNA"/>
</dbReference>
<dbReference type="PIR" id="F70675">
    <property type="entry name" value="F70675"/>
</dbReference>
<dbReference type="RefSeq" id="WP_003900088.1">
    <property type="nucleotide sequence ID" value="NZ_NVQJ01000014.1"/>
</dbReference>
<dbReference type="RefSeq" id="YP_177985.1">
    <property type="nucleotide sequence ID" value="NC_000962.3"/>
</dbReference>
<dbReference type="SMR" id="P9WHX7"/>
<dbReference type="STRING" id="83332.Rv3533c"/>
<dbReference type="PaxDb" id="83332-Rv3533c"/>
<dbReference type="DNASU" id="888385"/>
<dbReference type="GeneID" id="888385"/>
<dbReference type="KEGG" id="mtu:Rv3533c"/>
<dbReference type="KEGG" id="mtv:RVBD_3533c"/>
<dbReference type="TubercuList" id="Rv3533c"/>
<dbReference type="eggNOG" id="COG5651">
    <property type="taxonomic scope" value="Bacteria"/>
</dbReference>
<dbReference type="InParanoid" id="P9WHX7"/>
<dbReference type="OrthoDB" id="4697116at2"/>
<dbReference type="PhylomeDB" id="P9WHX7"/>
<dbReference type="Proteomes" id="UP000001584">
    <property type="component" value="Chromosome"/>
</dbReference>
<dbReference type="GO" id="GO:0052572">
    <property type="term" value="P:response to host immune response"/>
    <property type="evidence" value="ECO:0000318"/>
    <property type="project" value="GO_Central"/>
</dbReference>
<dbReference type="FunFam" id="1.20.1260.20:FF:000001">
    <property type="entry name" value="PPE family protein PPE41"/>
    <property type="match status" value="1"/>
</dbReference>
<dbReference type="Gene3D" id="1.20.1260.20">
    <property type="entry name" value="PPE superfamily"/>
    <property type="match status" value="1"/>
</dbReference>
<dbReference type="InterPro" id="IPR002989">
    <property type="entry name" value="Mycobac_pentapep"/>
</dbReference>
<dbReference type="InterPro" id="IPR000030">
    <property type="entry name" value="PPE_dom"/>
</dbReference>
<dbReference type="InterPro" id="IPR038332">
    <property type="entry name" value="PPE_sf"/>
</dbReference>
<dbReference type="PANTHER" id="PTHR46766">
    <property type="entry name" value="GLUTAMINE-RICH PROTEIN 2"/>
    <property type="match status" value="1"/>
</dbReference>
<dbReference type="PANTHER" id="PTHR46766:SF1">
    <property type="entry name" value="GLUTAMINE-RICH PROTEIN 2"/>
    <property type="match status" value="1"/>
</dbReference>
<dbReference type="Pfam" id="PF01469">
    <property type="entry name" value="Pentapeptide_2"/>
    <property type="match status" value="3"/>
</dbReference>
<dbReference type="Pfam" id="PF00823">
    <property type="entry name" value="PPE"/>
    <property type="match status" value="1"/>
</dbReference>
<dbReference type="SUPFAM" id="SSF140459">
    <property type="entry name" value="PE/PPE dimer-like"/>
    <property type="match status" value="1"/>
</dbReference>
<accession>P9WHX7</accession>
<accession>L0TFZ0</accession>
<accession>Q6MWW3</accession>
<accession>Q7D5C5</accession>
<gene>
    <name type="primary">PPE62</name>
    <name type="ordered locus">Rv3533c</name>
</gene>
<name>PPE62_MYCTU</name>
<evidence type="ECO:0000255" key="1"/>
<evidence type="ECO:0000256" key="2">
    <source>
        <dbReference type="SAM" id="MobiDB-lite"/>
    </source>
</evidence>
<evidence type="ECO:0000305" key="3"/>
<feature type="signal peptide" evidence="1">
    <location>
        <begin position="1"/>
        <end position="27"/>
    </location>
</feature>
<feature type="chain" id="PRO_0000379117" description="Uncharacterized PPE family protein PPE62">
    <location>
        <begin position="28"/>
        <end position="582"/>
    </location>
</feature>
<feature type="region of interest" description="Disordered" evidence="2">
    <location>
        <begin position="241"/>
        <end position="278"/>
    </location>
</feature>
<feature type="compositionally biased region" description="Gly residues" evidence="2">
    <location>
        <begin position="241"/>
        <end position="257"/>
    </location>
</feature>
<feature type="compositionally biased region" description="Low complexity" evidence="2">
    <location>
        <begin position="258"/>
        <end position="278"/>
    </location>
</feature>
<reference key="1">
    <citation type="journal article" date="1998" name="Nature">
        <title>Deciphering the biology of Mycobacterium tuberculosis from the complete genome sequence.</title>
        <authorList>
            <person name="Cole S.T."/>
            <person name="Brosch R."/>
            <person name="Parkhill J."/>
            <person name="Garnier T."/>
            <person name="Churcher C.M."/>
            <person name="Harris D.E."/>
            <person name="Gordon S.V."/>
            <person name="Eiglmeier K."/>
            <person name="Gas S."/>
            <person name="Barry C.E. III"/>
            <person name="Tekaia F."/>
            <person name="Badcock K."/>
            <person name="Basham D."/>
            <person name="Brown D."/>
            <person name="Chillingworth T."/>
            <person name="Connor R."/>
            <person name="Davies R.M."/>
            <person name="Devlin K."/>
            <person name="Feltwell T."/>
            <person name="Gentles S."/>
            <person name="Hamlin N."/>
            <person name="Holroyd S."/>
            <person name="Hornsby T."/>
            <person name="Jagels K."/>
            <person name="Krogh A."/>
            <person name="McLean J."/>
            <person name="Moule S."/>
            <person name="Murphy L.D."/>
            <person name="Oliver S."/>
            <person name="Osborne J."/>
            <person name="Quail M.A."/>
            <person name="Rajandream M.A."/>
            <person name="Rogers J."/>
            <person name="Rutter S."/>
            <person name="Seeger K."/>
            <person name="Skelton S."/>
            <person name="Squares S."/>
            <person name="Squares R."/>
            <person name="Sulston J.E."/>
            <person name="Taylor K."/>
            <person name="Whitehead S."/>
            <person name="Barrell B.G."/>
        </authorList>
    </citation>
    <scope>NUCLEOTIDE SEQUENCE [LARGE SCALE GENOMIC DNA]</scope>
    <source>
        <strain>ATCC 25618 / H37Rv</strain>
    </source>
</reference>
<sequence length="582" mass="55503">MNYAVLPPELNSLRMFTGAGSAPMLAAAVAWDGLAAELGSAASSFGSVTSDLASQAWQGPAAAAMAAAAAPYAGWLSAAAARAAGAAAQAKAVASAFEAARAATVHPLLVAANRNAFAQLVMSNWFGLNAPLIAAVEGAYEQMWAADVAAMVGYHSGASAAAEQLVPFQQALQQLPNLGIGNIGNANLGGGNTGDLNTGNGNIGNTNLGSGNRGDANLGSGNIGNSNVGGGNVGNGNFGSGNGRAGLPGSGNVGNGNLGNSNLGSGNTGNSNVGFGNTGNNNVGTGNAGSGNIGAGNTGSSNWGFGNNGIGNIGFGNTGNGNIGFGLTGNNQVGIGGLNSGSGNIGLFNSGTNNVGFFNSGNGNLGIGNSSDANVGIGNSGATVGPFVAGHNTGFGNSGSLNTGMGNAGGVNTGFGNGGAINLGFGNSGQLNAGSFNAGSINTGNFNSGQGNTGDFNAGVRNTGWSNSGLTNTGAFNAGSLNTGFGAVGTGSGPNSGFGNAGTNNSGFFNTGVGSSGFQNGGSNNSGLQNAVGTVIAAGFGNTGAQTVGIANSGVLNSGFFNSGVHNSGGFNSENQRSGFGN</sequence>